<comment type="function">
    <text evidence="1">Catalyzes the complicated ring closure reaction between the two acyclic compounds 1-deoxy-D-xylulose-5-phosphate (DXP) and 3-amino-2-oxopropyl phosphate (1-amino-acetone-3-phosphate or AAP) to form pyridoxine 5'-phosphate (PNP) and inorganic phosphate.</text>
</comment>
<comment type="catalytic activity">
    <reaction evidence="1">
        <text>3-amino-2-oxopropyl phosphate + 1-deoxy-D-xylulose 5-phosphate = pyridoxine 5'-phosphate + phosphate + 2 H2O + H(+)</text>
        <dbReference type="Rhea" id="RHEA:15265"/>
        <dbReference type="ChEBI" id="CHEBI:15377"/>
        <dbReference type="ChEBI" id="CHEBI:15378"/>
        <dbReference type="ChEBI" id="CHEBI:43474"/>
        <dbReference type="ChEBI" id="CHEBI:57279"/>
        <dbReference type="ChEBI" id="CHEBI:57792"/>
        <dbReference type="ChEBI" id="CHEBI:58589"/>
        <dbReference type="EC" id="2.6.99.2"/>
    </reaction>
</comment>
<comment type="pathway">
    <text evidence="1">Cofactor biosynthesis; pyridoxine 5'-phosphate biosynthesis; pyridoxine 5'-phosphate from D-erythrose 4-phosphate: step 5/5.</text>
</comment>
<comment type="subunit">
    <text evidence="1">Homooctamer; tetramer of dimers.</text>
</comment>
<comment type="subcellular location">
    <subcellularLocation>
        <location evidence="1">Cytoplasm</location>
    </subcellularLocation>
</comment>
<comment type="similarity">
    <text evidence="1">Belongs to the PNP synthase family.</text>
</comment>
<evidence type="ECO:0000255" key="1">
    <source>
        <dbReference type="HAMAP-Rule" id="MF_00279"/>
    </source>
</evidence>
<name>PDXJ_XANCP</name>
<reference key="1">
    <citation type="journal article" date="2002" name="Nature">
        <title>Comparison of the genomes of two Xanthomonas pathogens with differing host specificities.</title>
        <authorList>
            <person name="da Silva A.C.R."/>
            <person name="Ferro J.A."/>
            <person name="Reinach F.C."/>
            <person name="Farah C.S."/>
            <person name="Furlan L.R."/>
            <person name="Quaggio R.B."/>
            <person name="Monteiro-Vitorello C.B."/>
            <person name="Van Sluys M.A."/>
            <person name="Almeida N.F. Jr."/>
            <person name="Alves L.M.C."/>
            <person name="do Amaral A.M."/>
            <person name="Bertolini M.C."/>
            <person name="Camargo L.E.A."/>
            <person name="Camarotte G."/>
            <person name="Cannavan F."/>
            <person name="Cardozo J."/>
            <person name="Chambergo F."/>
            <person name="Ciapina L.P."/>
            <person name="Cicarelli R.M.B."/>
            <person name="Coutinho L.L."/>
            <person name="Cursino-Santos J.R."/>
            <person name="El-Dorry H."/>
            <person name="Faria J.B."/>
            <person name="Ferreira A.J.S."/>
            <person name="Ferreira R.C.C."/>
            <person name="Ferro M.I.T."/>
            <person name="Formighieri E.F."/>
            <person name="Franco M.C."/>
            <person name="Greggio C.C."/>
            <person name="Gruber A."/>
            <person name="Katsuyama A.M."/>
            <person name="Kishi L.T."/>
            <person name="Leite R.P."/>
            <person name="Lemos E.G.M."/>
            <person name="Lemos M.V.F."/>
            <person name="Locali E.C."/>
            <person name="Machado M.A."/>
            <person name="Madeira A.M.B.N."/>
            <person name="Martinez-Rossi N.M."/>
            <person name="Martins E.C."/>
            <person name="Meidanis J."/>
            <person name="Menck C.F.M."/>
            <person name="Miyaki C.Y."/>
            <person name="Moon D.H."/>
            <person name="Moreira L.M."/>
            <person name="Novo M.T.M."/>
            <person name="Okura V.K."/>
            <person name="Oliveira M.C."/>
            <person name="Oliveira V.R."/>
            <person name="Pereira H.A."/>
            <person name="Rossi A."/>
            <person name="Sena J.A.D."/>
            <person name="Silva C."/>
            <person name="de Souza R.F."/>
            <person name="Spinola L.A.F."/>
            <person name="Takita M.A."/>
            <person name="Tamura R.E."/>
            <person name="Teixeira E.C."/>
            <person name="Tezza R.I.D."/>
            <person name="Trindade dos Santos M."/>
            <person name="Truffi D."/>
            <person name="Tsai S.M."/>
            <person name="White F.F."/>
            <person name="Setubal J.C."/>
            <person name="Kitajima J.P."/>
        </authorList>
    </citation>
    <scope>NUCLEOTIDE SEQUENCE [LARGE SCALE GENOMIC DNA]</scope>
    <source>
        <strain>ATCC 33913 / DSM 3586 / NCPPB 528 / LMG 568 / P 25</strain>
    </source>
</reference>
<accession>Q8PEG8</accession>
<sequence length="256" mass="26800">MSTHLSVNVNKIAVLRNSRGGQDPDVVQAARSCIAAGAHGITVHPRPDQRHIRADDVYALSTLTRMHGVEFNIEGNPFAPPRAGYPGLLELCRATRPQQVTLVPDGDGQLTSDHGVDFARDGARLAPLIAAFKTLGCRVSLFVDAGNPEIAQAAALGADRIELYTGPYAEAHHHGQSQPSLALFADAARRAHAAGLGINAGHDLSQHNLADFLAGVPDVLEVSIGHALVGEALYQGLEPTVRAYLAIIAGGATTAA</sequence>
<gene>
    <name evidence="1" type="primary">pdxJ</name>
    <name type="ordered locus">XCC0012</name>
</gene>
<feature type="chain" id="PRO_0000190141" description="Pyridoxine 5'-phosphate synthase">
    <location>
        <begin position="1"/>
        <end position="256"/>
    </location>
</feature>
<feature type="active site" description="Proton acceptor" evidence="1">
    <location>
        <position position="44"/>
    </location>
</feature>
<feature type="active site" description="Proton acceptor" evidence="1">
    <location>
        <position position="74"/>
    </location>
</feature>
<feature type="active site" description="Proton donor" evidence="1">
    <location>
        <position position="202"/>
    </location>
</feature>
<feature type="binding site" evidence="1">
    <location>
        <position position="8"/>
    </location>
    <ligand>
        <name>3-amino-2-oxopropyl phosphate</name>
        <dbReference type="ChEBI" id="CHEBI:57279"/>
    </ligand>
</feature>
<feature type="binding site" evidence="1">
    <location>
        <position position="19"/>
    </location>
    <ligand>
        <name>3-amino-2-oxopropyl phosphate</name>
        <dbReference type="ChEBI" id="CHEBI:57279"/>
    </ligand>
</feature>
<feature type="binding site" evidence="1">
    <location>
        <position position="46"/>
    </location>
    <ligand>
        <name>1-deoxy-D-xylulose 5-phosphate</name>
        <dbReference type="ChEBI" id="CHEBI:57792"/>
    </ligand>
</feature>
<feature type="binding site" evidence="1">
    <location>
        <position position="51"/>
    </location>
    <ligand>
        <name>1-deoxy-D-xylulose 5-phosphate</name>
        <dbReference type="ChEBI" id="CHEBI:57792"/>
    </ligand>
</feature>
<feature type="binding site" evidence="1">
    <location>
        <position position="111"/>
    </location>
    <ligand>
        <name>1-deoxy-D-xylulose 5-phosphate</name>
        <dbReference type="ChEBI" id="CHEBI:57792"/>
    </ligand>
</feature>
<feature type="binding site" evidence="1">
    <location>
        <position position="203"/>
    </location>
    <ligand>
        <name>3-amino-2-oxopropyl phosphate</name>
        <dbReference type="ChEBI" id="CHEBI:57279"/>
    </ligand>
</feature>
<feature type="binding site" evidence="1">
    <location>
        <begin position="225"/>
        <end position="226"/>
    </location>
    <ligand>
        <name>3-amino-2-oxopropyl phosphate</name>
        <dbReference type="ChEBI" id="CHEBI:57279"/>
    </ligand>
</feature>
<feature type="site" description="Transition state stabilizer" evidence="1">
    <location>
        <position position="162"/>
    </location>
</feature>
<protein>
    <recommendedName>
        <fullName evidence="1">Pyridoxine 5'-phosphate synthase</fullName>
        <shortName evidence="1">PNP synthase</shortName>
        <ecNumber evidence="1">2.6.99.2</ecNumber>
    </recommendedName>
</protein>
<keyword id="KW-0963">Cytoplasm</keyword>
<keyword id="KW-0664">Pyridoxine biosynthesis</keyword>
<keyword id="KW-1185">Reference proteome</keyword>
<keyword id="KW-0808">Transferase</keyword>
<proteinExistence type="inferred from homology"/>
<organism>
    <name type="scientific">Xanthomonas campestris pv. campestris (strain ATCC 33913 / DSM 3586 / NCPPB 528 / LMG 568 / P 25)</name>
    <dbReference type="NCBI Taxonomy" id="190485"/>
    <lineage>
        <taxon>Bacteria</taxon>
        <taxon>Pseudomonadati</taxon>
        <taxon>Pseudomonadota</taxon>
        <taxon>Gammaproteobacteria</taxon>
        <taxon>Lysobacterales</taxon>
        <taxon>Lysobacteraceae</taxon>
        <taxon>Xanthomonas</taxon>
    </lineage>
</organism>
<dbReference type="EC" id="2.6.99.2" evidence="1"/>
<dbReference type="EMBL" id="AE008922">
    <property type="protein sequence ID" value="AAM39331.1"/>
    <property type="molecule type" value="Genomic_DNA"/>
</dbReference>
<dbReference type="RefSeq" id="NP_635407.1">
    <property type="nucleotide sequence ID" value="NC_003902.1"/>
</dbReference>
<dbReference type="RefSeq" id="WP_011035270.1">
    <property type="nucleotide sequence ID" value="NC_003902.1"/>
</dbReference>
<dbReference type="SMR" id="Q8PEG8"/>
<dbReference type="STRING" id="190485.XCC0012"/>
<dbReference type="EnsemblBacteria" id="AAM39331">
    <property type="protein sequence ID" value="AAM39331"/>
    <property type="gene ID" value="XCC0012"/>
</dbReference>
<dbReference type="KEGG" id="xcc:XCC0012"/>
<dbReference type="PATRIC" id="fig|190485.4.peg.12"/>
<dbReference type="eggNOG" id="COG0854">
    <property type="taxonomic scope" value="Bacteria"/>
</dbReference>
<dbReference type="HOGENOM" id="CLU_074563_1_0_6"/>
<dbReference type="OrthoDB" id="9806590at2"/>
<dbReference type="UniPathway" id="UPA00244">
    <property type="reaction ID" value="UER00313"/>
</dbReference>
<dbReference type="Proteomes" id="UP000001010">
    <property type="component" value="Chromosome"/>
</dbReference>
<dbReference type="GO" id="GO:0005829">
    <property type="term" value="C:cytosol"/>
    <property type="evidence" value="ECO:0000318"/>
    <property type="project" value="GO_Central"/>
</dbReference>
<dbReference type="GO" id="GO:0033856">
    <property type="term" value="F:pyridoxine 5'-phosphate synthase activity"/>
    <property type="evidence" value="ECO:0000318"/>
    <property type="project" value="GO_Central"/>
</dbReference>
<dbReference type="GO" id="GO:0008615">
    <property type="term" value="P:pyridoxine biosynthetic process"/>
    <property type="evidence" value="ECO:0000318"/>
    <property type="project" value="GO_Central"/>
</dbReference>
<dbReference type="CDD" id="cd00003">
    <property type="entry name" value="PNPsynthase"/>
    <property type="match status" value="1"/>
</dbReference>
<dbReference type="FunFam" id="3.20.20.70:FF:000150">
    <property type="entry name" value="Pyridoxine 5'-phosphate synthase"/>
    <property type="match status" value="1"/>
</dbReference>
<dbReference type="Gene3D" id="3.20.20.70">
    <property type="entry name" value="Aldolase class I"/>
    <property type="match status" value="1"/>
</dbReference>
<dbReference type="HAMAP" id="MF_00279">
    <property type="entry name" value="PdxJ"/>
    <property type="match status" value="1"/>
</dbReference>
<dbReference type="InterPro" id="IPR013785">
    <property type="entry name" value="Aldolase_TIM"/>
</dbReference>
<dbReference type="InterPro" id="IPR004569">
    <property type="entry name" value="PyrdxlP_synth_PdxJ"/>
</dbReference>
<dbReference type="InterPro" id="IPR036130">
    <property type="entry name" value="Pyridoxine-5'_phos_synth"/>
</dbReference>
<dbReference type="NCBIfam" id="TIGR00559">
    <property type="entry name" value="pdxJ"/>
    <property type="match status" value="1"/>
</dbReference>
<dbReference type="NCBIfam" id="NF003626">
    <property type="entry name" value="PRK05265.1-4"/>
    <property type="match status" value="1"/>
</dbReference>
<dbReference type="PANTHER" id="PTHR30456">
    <property type="entry name" value="PYRIDOXINE 5'-PHOSPHATE SYNTHASE"/>
    <property type="match status" value="1"/>
</dbReference>
<dbReference type="PANTHER" id="PTHR30456:SF0">
    <property type="entry name" value="PYRIDOXINE 5'-PHOSPHATE SYNTHASE"/>
    <property type="match status" value="1"/>
</dbReference>
<dbReference type="Pfam" id="PF03740">
    <property type="entry name" value="PdxJ"/>
    <property type="match status" value="1"/>
</dbReference>
<dbReference type="SUPFAM" id="SSF63892">
    <property type="entry name" value="Pyridoxine 5'-phosphate synthase"/>
    <property type="match status" value="1"/>
</dbReference>